<sequence>MSKRKQFLDSVHHEHVQDFLNFIKLHKDGADPFDLAEILAELQKSQRQDLWDRQLKLLQHSLTVSPSERWITGAEEDAGDMEVEVSEEQIQTMAVIEGVTIVSTVSVDALQEKDNYTTLLKCAQMLNAIESALPLSQTPLQQAIHWLFECWWRRDLQGKEELGWTAFLVCLENTVTLDKPVSELRRLCSLREVLLSVDFGSEKGQQVIDPLLQCFFRASHIKQEEGKRFLAFLFSWNDNFIRMIHETIKNQLQFFPKTLSVHVAEIYFRAWRKASGPFLEEIESACIQDLMQHALLLHRNSPVHSKVRQILTYFHKQKFREGVDEMLHRLYKPVLWKALKATNAEVRANATLLFTEAFPIHDPNMSSEMVDQAVQKQLDLLFALLDDPQPLVRSSAVLGVCSVLARCWEVIPSAVITDLLEKLILQLANDTSSPDVRCSVFMCMSIILDNSLSHPLMEKLLPALKSSLHDSSEKVRVAFVGMLLKIKAARAAKFWKVCSLEHLLARLEMDSAPVSKRIVNLLFNSFFPVNQPETVWCERCVTLIQTNPGAARKFYQHAYLYTAPANIVKLMLVIRKCLNVCIQNAGDEEFASSNKENSTLLEDVLSVQDTSSMASLLEILVILWKSVQKSLMANQEAFKYTTAKFGSSLPQYLKIFQEERCKAPLILLASLLPASALPALRSKVMSHLRSLKAGAAVTTYSQTLECLCSWGQISHIVELIENWLTEAAPVKEQGDEESTGKVHFDVLEESKPDLGLDYLDYMLLRPKTRECLLTLPLDQMRPLHKALNKWKSLLFSSLSGSEVSVAAIETALRAFIFHGRLCIHLQHKFPEEREFLKSLEHSVSWVEKRVLPFLVNSSSDQQLSLSTKIVESCVTVCKNVLRVSVGDSDFRDHLLQHVASVLQTEKGYMCIPHLLALLTEIAHGCLSQKAEGQEDQLSLTIRILTNIFQKVVEILAHRLRKDKEEGQELCCSSEEALHDFLLVTKFTSERSEFMTGVFSSLCAAVIIDISRPLQKISHVEELLMPETVNDLPPLSSTILKVTLGCPAVTRFFLSELSSSIESEAIDSITQWAAVTHILTIIKESDAFIVELKDIAGSVRRQIQNYYNSISENSDDIQRTIYESTVKMLNDVLISCQQTNN</sequence>
<name>CNDG2_DANRE</name>
<proteinExistence type="inferred from homology"/>
<keyword id="KW-0131">Cell cycle</keyword>
<keyword id="KW-0132">Cell division</keyword>
<keyword id="KW-0226">DNA condensation</keyword>
<keyword id="KW-0498">Mitosis</keyword>
<keyword id="KW-0539">Nucleus</keyword>
<keyword id="KW-1185">Reference proteome</keyword>
<feature type="chain" id="PRO_0000448939" description="Condensin-2 complex subunit G2">
    <location>
        <begin position="1"/>
        <end position="1140"/>
    </location>
</feature>
<feature type="repeat" description="HEAT" evidence="2">
    <location>
        <begin position="460"/>
        <end position="493"/>
    </location>
</feature>
<accession>E7FH61</accession>
<accession>F8W2J6</accession>
<evidence type="ECO:0000250" key="1">
    <source>
        <dbReference type="UniProtKB" id="Q86XI2"/>
    </source>
</evidence>
<evidence type="ECO:0000255" key="2">
    <source>
        <dbReference type="PROSITE-ProRule" id="PRU00103"/>
    </source>
</evidence>
<evidence type="ECO:0000269" key="3">
    <source>
    </source>
</evidence>
<evidence type="ECO:0000303" key="4">
    <source>
    </source>
</evidence>
<evidence type="ECO:0000305" key="5"/>
<evidence type="ECO:0000312" key="6">
    <source>
        <dbReference type="Proteomes" id="UP000000437"/>
    </source>
</evidence>
<evidence type="ECO:0000312" key="7">
    <source>
        <dbReference type="ZFIN" id="ZDB-GENE-070410-100"/>
    </source>
</evidence>
<protein>
    <recommendedName>
        <fullName evidence="5">Condensin-2 complex subunit G2</fullName>
    </recommendedName>
    <alternativeName>
        <fullName evidence="5">Chromosome-associated protein G2</fullName>
        <shortName evidence="5">CAP-G2</shortName>
    </alternativeName>
    <alternativeName>
        <fullName>Non-SMC condensin II complex subunit G2</fullName>
    </alternativeName>
</protein>
<reference evidence="6" key="1">
    <citation type="journal article" date="2013" name="Nature">
        <title>The zebrafish reference genome sequence and its relationship to the human genome.</title>
        <authorList>
            <person name="Howe K."/>
            <person name="Clark M.D."/>
            <person name="Torroja C.F."/>
            <person name="Torrance J."/>
            <person name="Berthelot C."/>
            <person name="Muffato M."/>
            <person name="Collins J.E."/>
            <person name="Humphray S."/>
            <person name="McLaren K."/>
            <person name="Matthews L."/>
            <person name="McLaren S."/>
            <person name="Sealy I."/>
            <person name="Caccamo M."/>
            <person name="Churcher C."/>
            <person name="Scott C."/>
            <person name="Barrett J.C."/>
            <person name="Koch R."/>
            <person name="Rauch G.J."/>
            <person name="White S."/>
            <person name="Chow W."/>
            <person name="Kilian B."/>
            <person name="Quintais L.T."/>
            <person name="Guerra-Assuncao J.A."/>
            <person name="Zhou Y."/>
            <person name="Gu Y."/>
            <person name="Yen J."/>
            <person name="Vogel J.H."/>
            <person name="Eyre T."/>
            <person name="Redmond S."/>
            <person name="Banerjee R."/>
            <person name="Chi J."/>
            <person name="Fu B."/>
            <person name="Langley E."/>
            <person name="Maguire S.F."/>
            <person name="Laird G.K."/>
            <person name="Lloyd D."/>
            <person name="Kenyon E."/>
            <person name="Donaldson S."/>
            <person name="Sehra H."/>
            <person name="Almeida-King J."/>
            <person name="Loveland J."/>
            <person name="Trevanion S."/>
            <person name="Jones M."/>
            <person name="Quail M."/>
            <person name="Willey D."/>
            <person name="Hunt A."/>
            <person name="Burton J."/>
            <person name="Sims S."/>
            <person name="McLay K."/>
            <person name="Plumb B."/>
            <person name="Davis J."/>
            <person name="Clee C."/>
            <person name="Oliver K."/>
            <person name="Clark R."/>
            <person name="Riddle C."/>
            <person name="Elliot D."/>
            <person name="Threadgold G."/>
            <person name="Harden G."/>
            <person name="Ware D."/>
            <person name="Begum S."/>
            <person name="Mortimore B."/>
            <person name="Kerry G."/>
            <person name="Heath P."/>
            <person name="Phillimore B."/>
            <person name="Tracey A."/>
            <person name="Corby N."/>
            <person name="Dunn M."/>
            <person name="Johnson C."/>
            <person name="Wood J."/>
            <person name="Clark S."/>
            <person name="Pelan S."/>
            <person name="Griffiths G."/>
            <person name="Smith M."/>
            <person name="Glithero R."/>
            <person name="Howden P."/>
            <person name="Barker N."/>
            <person name="Lloyd C."/>
            <person name="Stevens C."/>
            <person name="Harley J."/>
            <person name="Holt K."/>
            <person name="Panagiotidis G."/>
            <person name="Lovell J."/>
            <person name="Beasley H."/>
            <person name="Henderson C."/>
            <person name="Gordon D."/>
            <person name="Auger K."/>
            <person name="Wright D."/>
            <person name="Collins J."/>
            <person name="Raisen C."/>
            <person name="Dyer L."/>
            <person name="Leung K."/>
            <person name="Robertson L."/>
            <person name="Ambridge K."/>
            <person name="Leongamornlert D."/>
            <person name="McGuire S."/>
            <person name="Gilderthorp R."/>
            <person name="Griffiths C."/>
            <person name="Manthravadi D."/>
            <person name="Nichol S."/>
            <person name="Barker G."/>
            <person name="Whitehead S."/>
            <person name="Kay M."/>
            <person name="Brown J."/>
            <person name="Murnane C."/>
            <person name="Gray E."/>
            <person name="Humphries M."/>
            <person name="Sycamore N."/>
            <person name="Barker D."/>
            <person name="Saunders D."/>
            <person name="Wallis J."/>
            <person name="Babbage A."/>
            <person name="Hammond S."/>
            <person name="Mashreghi-Mohammadi M."/>
            <person name="Barr L."/>
            <person name="Martin S."/>
            <person name="Wray P."/>
            <person name="Ellington A."/>
            <person name="Matthews N."/>
            <person name="Ellwood M."/>
            <person name="Woodmansey R."/>
            <person name="Clark G."/>
            <person name="Cooper J."/>
            <person name="Tromans A."/>
            <person name="Grafham D."/>
            <person name="Skuce C."/>
            <person name="Pandian R."/>
            <person name="Andrews R."/>
            <person name="Harrison E."/>
            <person name="Kimberley A."/>
            <person name="Garnett J."/>
            <person name="Fosker N."/>
            <person name="Hall R."/>
            <person name="Garner P."/>
            <person name="Kelly D."/>
            <person name="Bird C."/>
            <person name="Palmer S."/>
            <person name="Gehring I."/>
            <person name="Berger A."/>
            <person name="Dooley C.M."/>
            <person name="Ersan-Urun Z."/>
            <person name="Eser C."/>
            <person name="Geiger H."/>
            <person name="Geisler M."/>
            <person name="Karotki L."/>
            <person name="Kirn A."/>
            <person name="Konantz J."/>
            <person name="Konantz M."/>
            <person name="Oberlander M."/>
            <person name="Rudolph-Geiger S."/>
            <person name="Teucke M."/>
            <person name="Lanz C."/>
            <person name="Raddatz G."/>
            <person name="Osoegawa K."/>
            <person name="Zhu B."/>
            <person name="Rapp A."/>
            <person name="Widaa S."/>
            <person name="Langford C."/>
            <person name="Yang F."/>
            <person name="Schuster S.C."/>
            <person name="Carter N.P."/>
            <person name="Harrow J."/>
            <person name="Ning Z."/>
            <person name="Herrero J."/>
            <person name="Searle S.M."/>
            <person name="Enright A."/>
            <person name="Geisler R."/>
            <person name="Plasterk R.H."/>
            <person name="Lee C."/>
            <person name="Westerfield M."/>
            <person name="de Jong P.J."/>
            <person name="Zon L.I."/>
            <person name="Postlethwait J.H."/>
            <person name="Nusslein-Volhard C."/>
            <person name="Hubbard T.J."/>
            <person name="Roest Crollius H."/>
            <person name="Rogers J."/>
            <person name="Stemple D.L."/>
        </authorList>
    </citation>
    <scope>NUCLEOTIDE SEQUENCE [LARGE SCALE GENOMIC DNA]</scope>
    <source>
        <strain evidence="6">Tuebingen</strain>
    </source>
</reference>
<reference evidence="5" key="2">
    <citation type="journal article" date="2019" name="Am. J. Hum. Genet.">
        <title>Mutations in NCAPG2 Cause a Severe Neurodevelopmental Syndrome that Expands the Phenotypic Spectrum of Condensinopathies.</title>
        <authorList>
            <consortium name="Task Force for Neonatal Genomics"/>
            <person name="Khan T.N."/>
            <person name="Khan K."/>
            <person name="Sadeghpour A."/>
            <person name="Reynolds H."/>
            <person name="Perilla Y."/>
            <person name="McDonald M.T."/>
            <person name="Gallentine W.B."/>
            <person name="Baig S.M."/>
            <person name="Davis E.E."/>
            <person name="Katsanis N."/>
        </authorList>
    </citation>
    <scope>FUNCTION</scope>
    <scope>DISRUPTION PHENOTYPE</scope>
</reference>
<gene>
    <name evidence="4 7" type="primary">ncapg2</name>
    <name evidence="7" type="ORF">zgc:162881</name>
</gene>
<dbReference type="EMBL" id="BX248235">
    <property type="status" value="NOT_ANNOTATED_CDS"/>
    <property type="molecule type" value="Genomic_DNA"/>
</dbReference>
<dbReference type="EMBL" id="BX324185">
    <property type="status" value="NOT_ANNOTATED_CDS"/>
    <property type="molecule type" value="Genomic_DNA"/>
</dbReference>
<dbReference type="EMBL" id="CU467647">
    <property type="status" value="NOT_ANNOTATED_CDS"/>
    <property type="molecule type" value="Genomic_DNA"/>
</dbReference>
<dbReference type="RefSeq" id="NP_001082961.3">
    <property type="nucleotide sequence ID" value="NM_001089492.3"/>
</dbReference>
<dbReference type="RefSeq" id="XP_005166482.2">
    <property type="nucleotide sequence ID" value="XM_005166425.4"/>
</dbReference>
<dbReference type="FunCoup" id="E7FH61">
    <property type="interactions" value="1451"/>
</dbReference>
<dbReference type="STRING" id="7955.ENSDARP00000124705"/>
<dbReference type="PaxDb" id="7955-ENSDARP00000078525"/>
<dbReference type="PeptideAtlas" id="E7FH61"/>
<dbReference type="Ensembl" id="ENSDART00000148390">
    <property type="protein sequence ID" value="ENSDARP00000124705"/>
    <property type="gene ID" value="ENSDARG00000060023"/>
</dbReference>
<dbReference type="GeneID" id="100037337"/>
<dbReference type="KEGG" id="dre:100037337"/>
<dbReference type="AGR" id="ZFIN:ZDB-GENE-070410-100"/>
<dbReference type="CTD" id="54892"/>
<dbReference type="ZFIN" id="ZDB-GENE-070410-100">
    <property type="gene designation" value="ncapg2"/>
</dbReference>
<dbReference type="eggNOG" id="KOG1949">
    <property type="taxonomic scope" value="Eukaryota"/>
</dbReference>
<dbReference type="HOGENOM" id="CLU_008117_0_0_1"/>
<dbReference type="InParanoid" id="E7FH61"/>
<dbReference type="OMA" id="FMHHGVH"/>
<dbReference type="OrthoDB" id="10062843at2759"/>
<dbReference type="TreeFam" id="TF101163"/>
<dbReference type="Reactome" id="R-DRE-2299718">
    <property type="pathway name" value="Condensation of Prophase Chromosomes"/>
</dbReference>
<dbReference type="PRO" id="PR:E7FH61"/>
<dbReference type="Proteomes" id="UP000000437">
    <property type="component" value="Alternate scaffold 7"/>
</dbReference>
<dbReference type="Proteomes" id="UP000000437">
    <property type="component" value="Chromosome 7"/>
</dbReference>
<dbReference type="Bgee" id="ENSDARG00000060023">
    <property type="expression patterns" value="Expressed in testis and 26 other cell types or tissues"/>
</dbReference>
<dbReference type="ExpressionAtlas" id="E7FH61">
    <property type="expression patterns" value="baseline and differential"/>
</dbReference>
<dbReference type="GO" id="GO:0000796">
    <property type="term" value="C:condensin complex"/>
    <property type="evidence" value="ECO:0000318"/>
    <property type="project" value="GO_Central"/>
</dbReference>
<dbReference type="GO" id="GO:0005634">
    <property type="term" value="C:nucleus"/>
    <property type="evidence" value="ECO:0000318"/>
    <property type="project" value="GO_Central"/>
</dbReference>
<dbReference type="GO" id="GO:0051301">
    <property type="term" value="P:cell division"/>
    <property type="evidence" value="ECO:0007669"/>
    <property type="project" value="UniProtKB-KW"/>
</dbReference>
<dbReference type="GO" id="GO:0030261">
    <property type="term" value="P:chromosome condensation"/>
    <property type="evidence" value="ECO:0007669"/>
    <property type="project" value="UniProtKB-KW"/>
</dbReference>
<dbReference type="GO" id="GO:0000070">
    <property type="term" value="P:mitotic sister chromatid segregation"/>
    <property type="evidence" value="ECO:0000318"/>
    <property type="project" value="GO_Central"/>
</dbReference>
<dbReference type="Gene3D" id="1.25.10.10">
    <property type="entry name" value="Leucine-rich Repeat Variant"/>
    <property type="match status" value="1"/>
</dbReference>
<dbReference type="InterPro" id="IPR011989">
    <property type="entry name" value="ARM-like"/>
</dbReference>
<dbReference type="InterPro" id="IPR016024">
    <property type="entry name" value="ARM-type_fold"/>
</dbReference>
<dbReference type="InterPro" id="IPR024741">
    <property type="entry name" value="Condensin2_G2"/>
</dbReference>
<dbReference type="PANTHER" id="PTHR16199">
    <property type="entry name" value="CONDENSIN-2 COMPLEX SUBUNIT G2"/>
    <property type="match status" value="1"/>
</dbReference>
<dbReference type="PANTHER" id="PTHR16199:SF4">
    <property type="entry name" value="CONDENSIN-2 COMPLEX SUBUNIT G2"/>
    <property type="match status" value="1"/>
</dbReference>
<dbReference type="Pfam" id="PF12422">
    <property type="entry name" value="Condensin2nSMC"/>
    <property type="match status" value="1"/>
</dbReference>
<dbReference type="SUPFAM" id="SSF48371">
    <property type="entry name" value="ARM repeat"/>
    <property type="match status" value="1"/>
</dbReference>
<organism evidence="6">
    <name type="scientific">Danio rerio</name>
    <name type="common">Zebrafish</name>
    <name type="synonym">Brachydanio rerio</name>
    <dbReference type="NCBI Taxonomy" id="7955"/>
    <lineage>
        <taxon>Eukaryota</taxon>
        <taxon>Metazoa</taxon>
        <taxon>Chordata</taxon>
        <taxon>Craniata</taxon>
        <taxon>Vertebrata</taxon>
        <taxon>Euteleostomi</taxon>
        <taxon>Actinopterygii</taxon>
        <taxon>Neopterygii</taxon>
        <taxon>Teleostei</taxon>
        <taxon>Ostariophysi</taxon>
        <taxon>Cypriniformes</taxon>
        <taxon>Danionidae</taxon>
        <taxon>Danioninae</taxon>
        <taxon>Danio</taxon>
    </lineage>
</organism>
<comment type="function">
    <text evidence="1 3">Regulatory subunit of the condensin-2 complex, a complex which establishes mitotic chromosome architecture and is involved in physical rigidity of the chromatid axis (By similarity). Plays a role in the embryonic development of the head and kidney structures (PubMed:30609410).</text>
</comment>
<comment type="subunit">
    <text evidence="1">Component of the condensin-2 complex, which contains the smc2 and smc4 heterodimer, and three non SMC subunits that probably regulate the complex: ncaph2, ncapd3 and ncapg2.</text>
</comment>
<comment type="subcellular location">
    <subcellularLocation>
        <location evidence="1">Nucleus</location>
    </subcellularLocation>
</comment>
<comment type="disruption phenotype">
    <text evidence="3">At 3 dpf, mutant animals exhibit cerebellar hypoplasia, a reduction in the anterior structures, including the optic tecta, and an increase in cell proliferation in the head (PubMed:30609410). At 2 dpf, aberrant mitotic cell-cycle progression and an increase in cell death (PubMed:30609410). At 4 dpf, renal defects including renal aplasia, hypoplasia and enlargment of the proximal renal convolution tubule are observed (PubMed:30609410). Morpholino knockdown results in reduced head size, increased cell proliferation in the head, increased cell death and increased renal-tubule diameter (PubMed:30609410). In a double morpholino knockdown together with nphp1, the increase in renal-tubule diameter is exacerbated (PubMed:30609410).</text>
</comment>